<accession>P19305</accession>
<protein>
    <recommendedName>
        <fullName>Uncharacterized 6.0 kDa protein</fullName>
    </recommendedName>
</protein>
<sequence length="53" mass="6014">MFLSIPSTAYIIDAVPLEEAWESSRVDFIKFICNLHLSGSNILGFRFHNSRGI</sequence>
<proteinExistence type="predicted"/>
<dbReference type="EMBL" id="X14855">
    <property type="protein sequence ID" value="CAA33001.1"/>
    <property type="molecule type" value="Genomic_DNA"/>
</dbReference>
<dbReference type="Proteomes" id="UP000009250">
    <property type="component" value="Genome"/>
</dbReference>
<organismHost>
    <name type="scientific">Thermoproteus tenax</name>
    <dbReference type="NCBI Taxonomy" id="2271"/>
</organismHost>
<feature type="chain" id="PRO_0000222987" description="Uncharacterized 6.0 kDa protein">
    <location>
        <begin position="1"/>
        <end position="53"/>
    </location>
</feature>
<keyword id="KW-1185">Reference proteome</keyword>
<organism>
    <name type="scientific">Thermoproteus tenax virus 1 (strain KRA1)</name>
    <name type="common">TTV1</name>
    <dbReference type="NCBI Taxonomy" id="10480"/>
    <lineage>
        <taxon>Viruses</taxon>
        <taxon>Adnaviria</taxon>
        <taxon>Zilligvirae</taxon>
        <taxon>Taleaviricota</taxon>
        <taxon>Tokiviricetes</taxon>
        <taxon>Primavirales</taxon>
        <taxon>Tristromaviridae</taxon>
        <taxon>Betatristromavirus</taxon>
        <taxon>Betatristromavirus TTV1</taxon>
    </lineage>
</organism>
<reference key="1">
    <citation type="submission" date="1989-03" db="EMBL/GenBank/DDBJ databases">
        <authorList>
            <person name="Neumann H."/>
        </authorList>
    </citation>
    <scope>NUCLEOTIDE SEQUENCE [GENOMIC DNA]</scope>
</reference>
<name>YORU_TTV1K</name>